<name>Y2261_BURCM</name>
<gene>
    <name type="ordered locus">Bamb_2261</name>
</gene>
<organism>
    <name type="scientific">Burkholderia ambifaria (strain ATCC BAA-244 / DSM 16087 / CCUG 44356 / LMG 19182 / AMMD)</name>
    <name type="common">Burkholderia cepacia (strain AMMD)</name>
    <dbReference type="NCBI Taxonomy" id="339670"/>
    <lineage>
        <taxon>Bacteria</taxon>
        <taxon>Pseudomonadati</taxon>
        <taxon>Pseudomonadota</taxon>
        <taxon>Betaproteobacteria</taxon>
        <taxon>Burkholderiales</taxon>
        <taxon>Burkholderiaceae</taxon>
        <taxon>Burkholderia</taxon>
        <taxon>Burkholderia cepacia complex</taxon>
    </lineage>
</organism>
<feature type="chain" id="PRO_1000061588" description="UPF0246 protein Bamb_2261">
    <location>
        <begin position="1"/>
        <end position="260"/>
    </location>
</feature>
<reference key="1">
    <citation type="submission" date="2006-08" db="EMBL/GenBank/DDBJ databases">
        <title>Complete sequence of chromosome 1 of Burkholderia cepacia AMMD.</title>
        <authorList>
            <person name="Copeland A."/>
            <person name="Lucas S."/>
            <person name="Lapidus A."/>
            <person name="Barry K."/>
            <person name="Detter J.C."/>
            <person name="Glavina del Rio T."/>
            <person name="Hammon N."/>
            <person name="Israni S."/>
            <person name="Pitluck S."/>
            <person name="Bruce D."/>
            <person name="Chain P."/>
            <person name="Malfatti S."/>
            <person name="Shin M."/>
            <person name="Vergez L."/>
            <person name="Schmutz J."/>
            <person name="Larimer F."/>
            <person name="Land M."/>
            <person name="Hauser L."/>
            <person name="Kyrpides N."/>
            <person name="Kim E."/>
            <person name="Parke J."/>
            <person name="Coenye T."/>
            <person name="Konstantinidis K."/>
            <person name="Ramette A."/>
            <person name="Tiedje J."/>
            <person name="Richardson P."/>
        </authorList>
    </citation>
    <scope>NUCLEOTIDE SEQUENCE [LARGE SCALE GENOMIC DNA]</scope>
    <source>
        <strain>ATCC BAA-244 / DSM 16087 / CCUG 44356 / LMG 19182 / AMMD</strain>
    </source>
</reference>
<proteinExistence type="inferred from homology"/>
<evidence type="ECO:0000255" key="1">
    <source>
        <dbReference type="HAMAP-Rule" id="MF_00652"/>
    </source>
</evidence>
<protein>
    <recommendedName>
        <fullName evidence="1">UPF0246 protein Bamb_2261</fullName>
    </recommendedName>
</protein>
<accession>Q0BDF6</accession>
<sequence length="260" mass="29112">MIIVLSPAKSLDYDTPAHVPSYTKPAFVDDASELIDGLRKLSPQDIATLMDISDPLARLNFQRYADWSPTFSPANAKQAVLAFNGDVYEGFDAKSLSAADLDYAQQHVRVLSGLYGLLRPLDLLQPYRLEMGTRFANARGKDLYAFWGDRITRALNEQLETRSGVARVLVNCASTEYFKSVKPKLLAAPVVTPVFEDWKGGRYKIISFHAKRARGLMARYIVENRIAEPAALKDFALEDYAFDAAASNDSTYVYRRRIGE</sequence>
<dbReference type="EMBL" id="CP000440">
    <property type="protein sequence ID" value="ABI87817.1"/>
    <property type="molecule type" value="Genomic_DNA"/>
</dbReference>
<dbReference type="RefSeq" id="WP_011657466.1">
    <property type="nucleotide sequence ID" value="NC_008390.1"/>
</dbReference>
<dbReference type="SMR" id="Q0BDF6"/>
<dbReference type="GeneID" id="93085531"/>
<dbReference type="KEGG" id="bam:Bamb_2261"/>
<dbReference type="PATRIC" id="fig|339670.21.peg.2666"/>
<dbReference type="eggNOG" id="COG3022">
    <property type="taxonomic scope" value="Bacteria"/>
</dbReference>
<dbReference type="Proteomes" id="UP000000662">
    <property type="component" value="Chromosome 1"/>
</dbReference>
<dbReference type="GO" id="GO:0005829">
    <property type="term" value="C:cytosol"/>
    <property type="evidence" value="ECO:0007669"/>
    <property type="project" value="TreeGrafter"/>
</dbReference>
<dbReference type="GO" id="GO:0033194">
    <property type="term" value="P:response to hydroperoxide"/>
    <property type="evidence" value="ECO:0007669"/>
    <property type="project" value="TreeGrafter"/>
</dbReference>
<dbReference type="HAMAP" id="MF_00652">
    <property type="entry name" value="UPF0246"/>
    <property type="match status" value="1"/>
</dbReference>
<dbReference type="InterPro" id="IPR005583">
    <property type="entry name" value="YaaA"/>
</dbReference>
<dbReference type="NCBIfam" id="NF002541">
    <property type="entry name" value="PRK02101.1-1"/>
    <property type="match status" value="1"/>
</dbReference>
<dbReference type="NCBIfam" id="NF002542">
    <property type="entry name" value="PRK02101.1-3"/>
    <property type="match status" value="1"/>
</dbReference>
<dbReference type="PANTHER" id="PTHR30283:SF4">
    <property type="entry name" value="PEROXIDE STRESS RESISTANCE PROTEIN YAAA"/>
    <property type="match status" value="1"/>
</dbReference>
<dbReference type="PANTHER" id="PTHR30283">
    <property type="entry name" value="PEROXIDE STRESS RESPONSE PROTEIN YAAA"/>
    <property type="match status" value="1"/>
</dbReference>
<dbReference type="Pfam" id="PF03883">
    <property type="entry name" value="H2O2_YaaD"/>
    <property type="match status" value="1"/>
</dbReference>
<comment type="similarity">
    <text evidence="1">Belongs to the UPF0246 family.</text>
</comment>